<keyword id="KW-0521">NADP</keyword>
<keyword id="KW-0560">Oxidoreductase</keyword>
<keyword id="KW-0627">Porphyrin biosynthesis</keyword>
<keyword id="KW-1185">Reference proteome</keyword>
<organism>
    <name type="scientific">Shewanella oneidensis (strain ATCC 700550 / JCM 31522 / CIP 106686 / LMG 19005 / NCIMB 14063 / MR-1)</name>
    <dbReference type="NCBI Taxonomy" id="211586"/>
    <lineage>
        <taxon>Bacteria</taxon>
        <taxon>Pseudomonadati</taxon>
        <taxon>Pseudomonadota</taxon>
        <taxon>Gammaproteobacteria</taxon>
        <taxon>Alteromonadales</taxon>
        <taxon>Shewanellaceae</taxon>
        <taxon>Shewanella</taxon>
    </lineage>
</organism>
<proteinExistence type="inferred from homology"/>
<reference key="1">
    <citation type="journal article" date="2002" name="Nat. Biotechnol.">
        <title>Genome sequence of the dissimilatory metal ion-reducing bacterium Shewanella oneidensis.</title>
        <authorList>
            <person name="Heidelberg J.F."/>
            <person name="Paulsen I.T."/>
            <person name="Nelson K.E."/>
            <person name="Gaidos E.J."/>
            <person name="Nelson W.C."/>
            <person name="Read T.D."/>
            <person name="Eisen J.A."/>
            <person name="Seshadri R."/>
            <person name="Ward N.L."/>
            <person name="Methe B.A."/>
            <person name="Clayton R.A."/>
            <person name="Meyer T."/>
            <person name="Tsapin A."/>
            <person name="Scott J."/>
            <person name="Beanan M.J."/>
            <person name="Brinkac L.M."/>
            <person name="Daugherty S.C."/>
            <person name="DeBoy R.T."/>
            <person name="Dodson R.J."/>
            <person name="Durkin A.S."/>
            <person name="Haft D.H."/>
            <person name="Kolonay J.F."/>
            <person name="Madupu R."/>
            <person name="Peterson J.D."/>
            <person name="Umayam L.A."/>
            <person name="White O."/>
            <person name="Wolf A.M."/>
            <person name="Vamathevan J.J."/>
            <person name="Weidman J.F."/>
            <person name="Impraim M."/>
            <person name="Lee K."/>
            <person name="Berry K.J."/>
            <person name="Lee C."/>
            <person name="Mueller J."/>
            <person name="Khouri H.M."/>
            <person name="Gill J."/>
            <person name="Utterback T.R."/>
            <person name="McDonald L.A."/>
            <person name="Feldblyum T.V."/>
            <person name="Smith H.O."/>
            <person name="Venter J.C."/>
            <person name="Nealson K.H."/>
            <person name="Fraser C.M."/>
        </authorList>
    </citation>
    <scope>NUCLEOTIDE SEQUENCE [LARGE SCALE GENOMIC DNA]</scope>
    <source>
        <strain>ATCC 700550 / JCM 31522 / CIP 106686 / LMG 19005 / NCIMB 14063 / MR-1</strain>
    </source>
</reference>
<gene>
    <name evidence="1" type="primary">hemA</name>
    <name type="ordered locus">SO_3834</name>
</gene>
<dbReference type="EC" id="1.2.1.70" evidence="1"/>
<dbReference type="EMBL" id="AE014299">
    <property type="protein sequence ID" value="AAN56811.1"/>
    <property type="molecule type" value="Genomic_DNA"/>
</dbReference>
<dbReference type="RefSeq" id="NP_719367.1">
    <property type="nucleotide sequence ID" value="NC_004347.2"/>
</dbReference>
<dbReference type="RefSeq" id="WP_011073598.1">
    <property type="nucleotide sequence ID" value="NZ_CP053946.1"/>
</dbReference>
<dbReference type="SMR" id="Q8EAR2"/>
<dbReference type="STRING" id="211586.SO_3834"/>
<dbReference type="PaxDb" id="211586-SO_3834"/>
<dbReference type="KEGG" id="son:SO_3834"/>
<dbReference type="PATRIC" id="fig|211586.12.peg.3722"/>
<dbReference type="eggNOG" id="COG0373">
    <property type="taxonomic scope" value="Bacteria"/>
</dbReference>
<dbReference type="HOGENOM" id="CLU_035113_2_2_6"/>
<dbReference type="OrthoDB" id="110209at2"/>
<dbReference type="PhylomeDB" id="Q8EAR2"/>
<dbReference type="BioCyc" id="SONE211586:G1GMP-3559-MONOMER"/>
<dbReference type="UniPathway" id="UPA00251">
    <property type="reaction ID" value="UER00316"/>
</dbReference>
<dbReference type="Proteomes" id="UP000008186">
    <property type="component" value="Chromosome"/>
</dbReference>
<dbReference type="GO" id="GO:0008883">
    <property type="term" value="F:glutamyl-tRNA reductase activity"/>
    <property type="evidence" value="ECO:0000318"/>
    <property type="project" value="GO_Central"/>
</dbReference>
<dbReference type="GO" id="GO:0050661">
    <property type="term" value="F:NADP binding"/>
    <property type="evidence" value="ECO:0007669"/>
    <property type="project" value="InterPro"/>
</dbReference>
<dbReference type="GO" id="GO:0019353">
    <property type="term" value="P:protoporphyrinogen IX biosynthetic process from glutamate"/>
    <property type="evidence" value="ECO:0000318"/>
    <property type="project" value="GO_Central"/>
</dbReference>
<dbReference type="CDD" id="cd05213">
    <property type="entry name" value="NAD_bind_Glutamyl_tRNA_reduct"/>
    <property type="match status" value="1"/>
</dbReference>
<dbReference type="FunFam" id="3.30.460.30:FF:000001">
    <property type="entry name" value="Glutamyl-tRNA reductase"/>
    <property type="match status" value="1"/>
</dbReference>
<dbReference type="FunFam" id="3.40.50.720:FF:000031">
    <property type="entry name" value="Glutamyl-tRNA reductase"/>
    <property type="match status" value="1"/>
</dbReference>
<dbReference type="Gene3D" id="3.30.460.30">
    <property type="entry name" value="Glutamyl-tRNA reductase, N-terminal domain"/>
    <property type="match status" value="1"/>
</dbReference>
<dbReference type="Gene3D" id="3.40.50.720">
    <property type="entry name" value="NAD(P)-binding Rossmann-like Domain"/>
    <property type="match status" value="1"/>
</dbReference>
<dbReference type="HAMAP" id="MF_00087">
    <property type="entry name" value="Glu_tRNA_reductase"/>
    <property type="match status" value="1"/>
</dbReference>
<dbReference type="InterPro" id="IPR000343">
    <property type="entry name" value="4pyrrol_synth_GluRdtase"/>
</dbReference>
<dbReference type="InterPro" id="IPR015896">
    <property type="entry name" value="4pyrrol_synth_GluRdtase_dimer"/>
</dbReference>
<dbReference type="InterPro" id="IPR015895">
    <property type="entry name" value="4pyrrol_synth_GluRdtase_N"/>
</dbReference>
<dbReference type="InterPro" id="IPR018214">
    <property type="entry name" value="GluRdtase_CS"/>
</dbReference>
<dbReference type="InterPro" id="IPR036453">
    <property type="entry name" value="GluRdtase_dimer_dom_sf"/>
</dbReference>
<dbReference type="InterPro" id="IPR036343">
    <property type="entry name" value="GluRdtase_N_sf"/>
</dbReference>
<dbReference type="InterPro" id="IPR036291">
    <property type="entry name" value="NAD(P)-bd_dom_sf"/>
</dbReference>
<dbReference type="InterPro" id="IPR006151">
    <property type="entry name" value="Shikm_DH/Glu-tRNA_Rdtase"/>
</dbReference>
<dbReference type="NCBIfam" id="TIGR01035">
    <property type="entry name" value="hemA"/>
    <property type="match status" value="1"/>
</dbReference>
<dbReference type="PANTHER" id="PTHR43013">
    <property type="entry name" value="GLUTAMYL-TRNA REDUCTASE"/>
    <property type="match status" value="1"/>
</dbReference>
<dbReference type="PANTHER" id="PTHR43013:SF1">
    <property type="entry name" value="GLUTAMYL-TRNA REDUCTASE"/>
    <property type="match status" value="1"/>
</dbReference>
<dbReference type="Pfam" id="PF00745">
    <property type="entry name" value="GlutR_dimer"/>
    <property type="match status" value="1"/>
</dbReference>
<dbReference type="Pfam" id="PF05201">
    <property type="entry name" value="GlutR_N"/>
    <property type="match status" value="1"/>
</dbReference>
<dbReference type="Pfam" id="PF01488">
    <property type="entry name" value="Shikimate_DH"/>
    <property type="match status" value="1"/>
</dbReference>
<dbReference type="PIRSF" id="PIRSF000445">
    <property type="entry name" value="4pyrrol_synth_GluRdtase"/>
    <property type="match status" value="1"/>
</dbReference>
<dbReference type="SUPFAM" id="SSF69742">
    <property type="entry name" value="Glutamyl tRNA-reductase catalytic, N-terminal domain"/>
    <property type="match status" value="1"/>
</dbReference>
<dbReference type="SUPFAM" id="SSF69075">
    <property type="entry name" value="Glutamyl tRNA-reductase dimerization domain"/>
    <property type="match status" value="1"/>
</dbReference>
<dbReference type="SUPFAM" id="SSF51735">
    <property type="entry name" value="NAD(P)-binding Rossmann-fold domains"/>
    <property type="match status" value="1"/>
</dbReference>
<dbReference type="PROSITE" id="PS00747">
    <property type="entry name" value="GLUTR"/>
    <property type="match status" value="1"/>
</dbReference>
<accession>Q8EAR2</accession>
<protein>
    <recommendedName>
        <fullName evidence="1">Glutamyl-tRNA reductase</fullName>
        <shortName evidence="1">GluTR</shortName>
        <ecNumber evidence="1">1.2.1.70</ecNumber>
    </recommendedName>
</protein>
<comment type="function">
    <text evidence="1">Catalyzes the NADPH-dependent reduction of glutamyl-tRNA(Glu) to glutamate 1-semialdehyde (GSA).</text>
</comment>
<comment type="catalytic activity">
    <reaction evidence="1">
        <text>(S)-4-amino-5-oxopentanoate + tRNA(Glu) + NADP(+) = L-glutamyl-tRNA(Glu) + NADPH + H(+)</text>
        <dbReference type="Rhea" id="RHEA:12344"/>
        <dbReference type="Rhea" id="RHEA-COMP:9663"/>
        <dbReference type="Rhea" id="RHEA-COMP:9680"/>
        <dbReference type="ChEBI" id="CHEBI:15378"/>
        <dbReference type="ChEBI" id="CHEBI:57501"/>
        <dbReference type="ChEBI" id="CHEBI:57783"/>
        <dbReference type="ChEBI" id="CHEBI:58349"/>
        <dbReference type="ChEBI" id="CHEBI:78442"/>
        <dbReference type="ChEBI" id="CHEBI:78520"/>
        <dbReference type="EC" id="1.2.1.70"/>
    </reaction>
</comment>
<comment type="pathway">
    <text evidence="1">Porphyrin-containing compound metabolism; protoporphyrin-IX biosynthesis; 5-aminolevulinate from L-glutamyl-tRNA(Glu): step 1/2.</text>
</comment>
<comment type="subunit">
    <text evidence="1">Homodimer.</text>
</comment>
<comment type="domain">
    <text evidence="1">Possesses an unusual extended V-shaped dimeric structure with each monomer consisting of three distinct domains arranged along a curved 'spinal' alpha-helix. The N-terminal catalytic domain specifically recognizes the glutamate moiety of the substrate. The second domain is the NADPH-binding domain, and the third C-terminal domain is responsible for dimerization.</text>
</comment>
<comment type="miscellaneous">
    <text evidence="1">During catalysis, the active site Cys acts as a nucleophile attacking the alpha-carbonyl group of tRNA-bound glutamate with the formation of a thioester intermediate between enzyme and glutamate, and the concomitant release of tRNA(Glu). The thioester intermediate is finally reduced by direct hydride transfer from NADPH, to form the product GSA.</text>
</comment>
<comment type="similarity">
    <text evidence="1">Belongs to the glutamyl-tRNA reductase family.</text>
</comment>
<evidence type="ECO:0000255" key="1">
    <source>
        <dbReference type="HAMAP-Rule" id="MF_00087"/>
    </source>
</evidence>
<sequence>MSLVAIGINHKTATVDLREKVAFSPDKIHDAMKSLASRTRSGEAVIVSTCNRTELYCNNGDETDIIEWLEEYHGLEHQDVAPCLYNYHGQEAVRHLMRVASGLDSLILGEPQILGQVKQAFVKAKEAGTVALTIDRLFQNTFSVAKKVRTETEIGAAAVSVAFAAVSMAKHIFSSLSTTKVLLIGAGETIELVAKHLKDNGVASMVVANRTLERAQSMCEEFNATAITLAQIPDFLPKADIVISSTASPLPILGKGMVEKALKQRRHQPMLLVDIAVPRDIEPEVADLDDAFLYTVDDLHSIIEQNKASRKEAAEQAELITEEQSHLFMEWVRSLESVDSIREYRSQSMAIKDELVERALNKLAQGGDTEQVLVELANRLTNRLIHAPTQALTVASRQGDLNTLGQLRTALGLDKN</sequence>
<feature type="chain" id="PRO_0000114065" description="Glutamyl-tRNA reductase">
    <location>
        <begin position="1"/>
        <end position="416"/>
    </location>
</feature>
<feature type="active site" description="Nucleophile" evidence="1">
    <location>
        <position position="50"/>
    </location>
</feature>
<feature type="binding site" evidence="1">
    <location>
        <begin position="49"/>
        <end position="52"/>
    </location>
    <ligand>
        <name>substrate</name>
    </ligand>
</feature>
<feature type="binding site" evidence="1">
    <location>
        <position position="105"/>
    </location>
    <ligand>
        <name>substrate</name>
    </ligand>
</feature>
<feature type="binding site" evidence="1">
    <location>
        <begin position="110"/>
        <end position="112"/>
    </location>
    <ligand>
        <name>substrate</name>
    </ligand>
</feature>
<feature type="binding site" evidence="1">
    <location>
        <position position="116"/>
    </location>
    <ligand>
        <name>substrate</name>
    </ligand>
</feature>
<feature type="binding site" evidence="1">
    <location>
        <begin position="185"/>
        <end position="190"/>
    </location>
    <ligand>
        <name>NADP(+)</name>
        <dbReference type="ChEBI" id="CHEBI:58349"/>
    </ligand>
</feature>
<feature type="site" description="Important for activity" evidence="1">
    <location>
        <position position="95"/>
    </location>
</feature>
<name>HEM1_SHEON</name>